<comment type="function">
    <text evidence="1">One of the primary rRNA binding proteins, it binds directly to 16S rRNA where it helps nucleate assembly of the platform of the 30S subunit by binding and bridging several RNA helices of the 16S rRNA.</text>
</comment>
<comment type="function">
    <text evidence="1">Forms an intersubunit bridge (bridge B4) with the 23S rRNA of the 50S subunit in the ribosome.</text>
</comment>
<comment type="subunit">
    <text evidence="1">Part of the 30S ribosomal subunit. Forms a bridge to the 50S subunit in the 70S ribosome, contacting the 23S rRNA.</text>
</comment>
<comment type="similarity">
    <text evidence="1">Belongs to the universal ribosomal protein uS15 family.</text>
</comment>
<sequence>MAISKEKKNEIIAQYARHEGDTGSVEVQVAVLTWEINHLNEHIKQHKKDHATYRGLMKKIGRRRNLLAYLRKNDVNRYRELINSLGLRR</sequence>
<protein>
    <recommendedName>
        <fullName evidence="1">Small ribosomal subunit protein uS15</fullName>
    </recommendedName>
    <alternativeName>
        <fullName evidence="2">30S ribosomal protein S15</fullName>
    </alternativeName>
</protein>
<gene>
    <name evidence="1" type="primary">rpsO</name>
    <name type="ordered locus">SPCG_1601</name>
</gene>
<feature type="chain" id="PRO_1000143179" description="Small ribosomal subunit protein uS15">
    <location>
        <begin position="1"/>
        <end position="89"/>
    </location>
</feature>
<organism>
    <name type="scientific">Streptococcus pneumoniae (strain CGSP14)</name>
    <dbReference type="NCBI Taxonomy" id="516950"/>
    <lineage>
        <taxon>Bacteria</taxon>
        <taxon>Bacillati</taxon>
        <taxon>Bacillota</taxon>
        <taxon>Bacilli</taxon>
        <taxon>Lactobacillales</taxon>
        <taxon>Streptococcaceae</taxon>
        <taxon>Streptococcus</taxon>
    </lineage>
</organism>
<accession>B2IRD4</accession>
<keyword id="KW-0687">Ribonucleoprotein</keyword>
<keyword id="KW-0689">Ribosomal protein</keyword>
<keyword id="KW-0694">RNA-binding</keyword>
<keyword id="KW-0699">rRNA-binding</keyword>
<evidence type="ECO:0000255" key="1">
    <source>
        <dbReference type="HAMAP-Rule" id="MF_01343"/>
    </source>
</evidence>
<evidence type="ECO:0000305" key="2"/>
<name>RS15_STRPS</name>
<proteinExistence type="inferred from homology"/>
<reference key="1">
    <citation type="journal article" date="2009" name="BMC Genomics">
        <title>Genome evolution driven by host adaptations results in a more virulent and antimicrobial-resistant Streptococcus pneumoniae serotype 14.</title>
        <authorList>
            <person name="Ding F."/>
            <person name="Tang P."/>
            <person name="Hsu M.-H."/>
            <person name="Cui P."/>
            <person name="Hu S."/>
            <person name="Yu J."/>
            <person name="Chiu C.-H."/>
        </authorList>
    </citation>
    <scope>NUCLEOTIDE SEQUENCE [LARGE SCALE GENOMIC DNA]</scope>
    <source>
        <strain>CGSP14</strain>
    </source>
</reference>
<dbReference type="EMBL" id="CP001033">
    <property type="protein sequence ID" value="ACB90853.1"/>
    <property type="molecule type" value="Genomic_DNA"/>
</dbReference>
<dbReference type="RefSeq" id="WP_001018251.1">
    <property type="nucleotide sequence ID" value="NC_010582.1"/>
</dbReference>
<dbReference type="SMR" id="B2IRD4"/>
<dbReference type="GeneID" id="93847676"/>
<dbReference type="KEGG" id="spw:SPCG_1601"/>
<dbReference type="HOGENOM" id="CLU_148518_0_0_9"/>
<dbReference type="GO" id="GO:0022627">
    <property type="term" value="C:cytosolic small ribosomal subunit"/>
    <property type="evidence" value="ECO:0007669"/>
    <property type="project" value="TreeGrafter"/>
</dbReference>
<dbReference type="GO" id="GO:0019843">
    <property type="term" value="F:rRNA binding"/>
    <property type="evidence" value="ECO:0007669"/>
    <property type="project" value="UniProtKB-UniRule"/>
</dbReference>
<dbReference type="GO" id="GO:0003735">
    <property type="term" value="F:structural constituent of ribosome"/>
    <property type="evidence" value="ECO:0007669"/>
    <property type="project" value="InterPro"/>
</dbReference>
<dbReference type="GO" id="GO:0006412">
    <property type="term" value="P:translation"/>
    <property type="evidence" value="ECO:0007669"/>
    <property type="project" value="UniProtKB-UniRule"/>
</dbReference>
<dbReference type="CDD" id="cd00353">
    <property type="entry name" value="Ribosomal_S15p_S13e"/>
    <property type="match status" value="1"/>
</dbReference>
<dbReference type="FunFam" id="1.10.287.10:FF:000002">
    <property type="entry name" value="30S ribosomal protein S15"/>
    <property type="match status" value="1"/>
</dbReference>
<dbReference type="Gene3D" id="6.10.250.3130">
    <property type="match status" value="1"/>
</dbReference>
<dbReference type="Gene3D" id="1.10.287.10">
    <property type="entry name" value="S15/NS1, RNA-binding"/>
    <property type="match status" value="1"/>
</dbReference>
<dbReference type="HAMAP" id="MF_01343_B">
    <property type="entry name" value="Ribosomal_uS15_B"/>
    <property type="match status" value="1"/>
</dbReference>
<dbReference type="InterPro" id="IPR000589">
    <property type="entry name" value="Ribosomal_uS15"/>
</dbReference>
<dbReference type="InterPro" id="IPR005290">
    <property type="entry name" value="Ribosomal_uS15_bac-type"/>
</dbReference>
<dbReference type="InterPro" id="IPR009068">
    <property type="entry name" value="uS15_NS1_RNA-bd_sf"/>
</dbReference>
<dbReference type="NCBIfam" id="TIGR00952">
    <property type="entry name" value="S15_bact"/>
    <property type="match status" value="1"/>
</dbReference>
<dbReference type="PANTHER" id="PTHR23321">
    <property type="entry name" value="RIBOSOMAL PROTEIN S15, BACTERIAL AND ORGANELLAR"/>
    <property type="match status" value="1"/>
</dbReference>
<dbReference type="PANTHER" id="PTHR23321:SF26">
    <property type="entry name" value="SMALL RIBOSOMAL SUBUNIT PROTEIN US15M"/>
    <property type="match status" value="1"/>
</dbReference>
<dbReference type="Pfam" id="PF00312">
    <property type="entry name" value="Ribosomal_S15"/>
    <property type="match status" value="1"/>
</dbReference>
<dbReference type="SMART" id="SM01387">
    <property type="entry name" value="Ribosomal_S15"/>
    <property type="match status" value="1"/>
</dbReference>
<dbReference type="SUPFAM" id="SSF47060">
    <property type="entry name" value="S15/NS1 RNA-binding domain"/>
    <property type="match status" value="1"/>
</dbReference>
<dbReference type="PROSITE" id="PS00362">
    <property type="entry name" value="RIBOSOMAL_S15"/>
    <property type="match status" value="1"/>
</dbReference>